<evidence type="ECO:0000255" key="1">
    <source>
        <dbReference type="HAMAP-Rule" id="MF_01576"/>
    </source>
</evidence>
<protein>
    <recommendedName>
        <fullName evidence="1">Bifunctional protein FolD</fullName>
    </recommendedName>
    <domain>
        <recommendedName>
            <fullName evidence="1">Methylenetetrahydrofolate dehydrogenase</fullName>
            <ecNumber evidence="1">1.5.1.5</ecNumber>
        </recommendedName>
    </domain>
    <domain>
        <recommendedName>
            <fullName evidence="1">Methenyltetrahydrofolate cyclohydrolase</fullName>
            <ecNumber evidence="1">3.5.4.9</ecNumber>
        </recommendedName>
    </domain>
</protein>
<organism>
    <name type="scientific">Lysinibacillus sphaericus (strain C3-41)</name>
    <dbReference type="NCBI Taxonomy" id="444177"/>
    <lineage>
        <taxon>Bacteria</taxon>
        <taxon>Bacillati</taxon>
        <taxon>Bacillota</taxon>
        <taxon>Bacilli</taxon>
        <taxon>Bacillales</taxon>
        <taxon>Bacillaceae</taxon>
        <taxon>Lysinibacillus</taxon>
    </lineage>
</organism>
<reference key="1">
    <citation type="journal article" date="2008" name="J. Bacteriol.">
        <title>Complete genome sequence of the mosquitocidal bacterium Bacillus sphaericus C3-41 and comparison with those of closely related Bacillus species.</title>
        <authorList>
            <person name="Hu X."/>
            <person name="Fan W."/>
            <person name="Han B."/>
            <person name="Liu H."/>
            <person name="Zheng D."/>
            <person name="Li Q."/>
            <person name="Dong W."/>
            <person name="Yan J."/>
            <person name="Gao M."/>
            <person name="Berry C."/>
            <person name="Yuan Z."/>
        </authorList>
    </citation>
    <scope>NUCLEOTIDE SEQUENCE [LARGE SCALE GENOMIC DNA]</scope>
    <source>
        <strain>C3-41</strain>
    </source>
</reference>
<name>FOLD_LYSSC</name>
<keyword id="KW-0028">Amino-acid biosynthesis</keyword>
<keyword id="KW-0368">Histidine biosynthesis</keyword>
<keyword id="KW-0378">Hydrolase</keyword>
<keyword id="KW-0486">Methionine biosynthesis</keyword>
<keyword id="KW-0511">Multifunctional enzyme</keyword>
<keyword id="KW-0521">NADP</keyword>
<keyword id="KW-0554">One-carbon metabolism</keyword>
<keyword id="KW-0560">Oxidoreductase</keyword>
<keyword id="KW-0658">Purine biosynthesis</keyword>
<comment type="function">
    <text evidence="1">Catalyzes the oxidation of 5,10-methylenetetrahydrofolate to 5,10-methenyltetrahydrofolate and then the hydrolysis of 5,10-methenyltetrahydrofolate to 10-formyltetrahydrofolate.</text>
</comment>
<comment type="catalytic activity">
    <reaction evidence="1">
        <text>(6R)-5,10-methylene-5,6,7,8-tetrahydrofolate + NADP(+) = (6R)-5,10-methenyltetrahydrofolate + NADPH</text>
        <dbReference type="Rhea" id="RHEA:22812"/>
        <dbReference type="ChEBI" id="CHEBI:15636"/>
        <dbReference type="ChEBI" id="CHEBI:57455"/>
        <dbReference type="ChEBI" id="CHEBI:57783"/>
        <dbReference type="ChEBI" id="CHEBI:58349"/>
        <dbReference type="EC" id="1.5.1.5"/>
    </reaction>
</comment>
<comment type="catalytic activity">
    <reaction evidence="1">
        <text>(6R)-5,10-methenyltetrahydrofolate + H2O = (6R)-10-formyltetrahydrofolate + H(+)</text>
        <dbReference type="Rhea" id="RHEA:23700"/>
        <dbReference type="ChEBI" id="CHEBI:15377"/>
        <dbReference type="ChEBI" id="CHEBI:15378"/>
        <dbReference type="ChEBI" id="CHEBI:57455"/>
        <dbReference type="ChEBI" id="CHEBI:195366"/>
        <dbReference type="EC" id="3.5.4.9"/>
    </reaction>
</comment>
<comment type="pathway">
    <text evidence="1">One-carbon metabolism; tetrahydrofolate interconversion.</text>
</comment>
<comment type="subunit">
    <text evidence="1">Homodimer.</text>
</comment>
<comment type="similarity">
    <text evidence="1">Belongs to the tetrahydrofolate dehydrogenase/cyclohydrolase family.</text>
</comment>
<proteinExistence type="inferred from homology"/>
<dbReference type="EC" id="1.5.1.5" evidence="1"/>
<dbReference type="EC" id="3.5.4.9" evidence="1"/>
<dbReference type="EMBL" id="CP000817">
    <property type="protein sequence ID" value="ACA41002.1"/>
    <property type="molecule type" value="Genomic_DNA"/>
</dbReference>
<dbReference type="RefSeq" id="WP_012295061.1">
    <property type="nucleotide sequence ID" value="NC_010382.1"/>
</dbReference>
<dbReference type="SMR" id="B1HRX9"/>
<dbReference type="EnsemblBacteria" id="ACA41002">
    <property type="protein sequence ID" value="ACA41002"/>
    <property type="gene ID" value="Bsph_3514"/>
</dbReference>
<dbReference type="KEGG" id="lsp:Bsph_3514"/>
<dbReference type="HOGENOM" id="CLU_034045_2_1_9"/>
<dbReference type="UniPathway" id="UPA00193"/>
<dbReference type="Proteomes" id="UP000002164">
    <property type="component" value="Chromosome"/>
</dbReference>
<dbReference type="GO" id="GO:0005829">
    <property type="term" value="C:cytosol"/>
    <property type="evidence" value="ECO:0007669"/>
    <property type="project" value="TreeGrafter"/>
</dbReference>
<dbReference type="GO" id="GO:0004477">
    <property type="term" value="F:methenyltetrahydrofolate cyclohydrolase activity"/>
    <property type="evidence" value="ECO:0007669"/>
    <property type="project" value="UniProtKB-UniRule"/>
</dbReference>
<dbReference type="GO" id="GO:0004488">
    <property type="term" value="F:methylenetetrahydrofolate dehydrogenase (NADP+) activity"/>
    <property type="evidence" value="ECO:0007669"/>
    <property type="project" value="UniProtKB-UniRule"/>
</dbReference>
<dbReference type="GO" id="GO:0000105">
    <property type="term" value="P:L-histidine biosynthetic process"/>
    <property type="evidence" value="ECO:0007669"/>
    <property type="project" value="UniProtKB-KW"/>
</dbReference>
<dbReference type="GO" id="GO:0009086">
    <property type="term" value="P:methionine biosynthetic process"/>
    <property type="evidence" value="ECO:0007669"/>
    <property type="project" value="UniProtKB-KW"/>
</dbReference>
<dbReference type="GO" id="GO:0006164">
    <property type="term" value="P:purine nucleotide biosynthetic process"/>
    <property type="evidence" value="ECO:0007669"/>
    <property type="project" value="UniProtKB-KW"/>
</dbReference>
<dbReference type="GO" id="GO:0035999">
    <property type="term" value="P:tetrahydrofolate interconversion"/>
    <property type="evidence" value="ECO:0007669"/>
    <property type="project" value="UniProtKB-UniRule"/>
</dbReference>
<dbReference type="CDD" id="cd01080">
    <property type="entry name" value="NAD_bind_m-THF_DH_Cyclohyd"/>
    <property type="match status" value="1"/>
</dbReference>
<dbReference type="FunFam" id="3.40.50.10860:FF:000001">
    <property type="entry name" value="Bifunctional protein FolD"/>
    <property type="match status" value="1"/>
</dbReference>
<dbReference type="FunFam" id="3.40.50.720:FF:000094">
    <property type="entry name" value="Bifunctional protein FolD"/>
    <property type="match status" value="1"/>
</dbReference>
<dbReference type="Gene3D" id="3.40.50.10860">
    <property type="entry name" value="Leucine Dehydrogenase, chain A, domain 1"/>
    <property type="match status" value="1"/>
</dbReference>
<dbReference type="Gene3D" id="3.40.50.720">
    <property type="entry name" value="NAD(P)-binding Rossmann-like Domain"/>
    <property type="match status" value="1"/>
</dbReference>
<dbReference type="HAMAP" id="MF_01576">
    <property type="entry name" value="THF_DHG_CYH"/>
    <property type="match status" value="1"/>
</dbReference>
<dbReference type="InterPro" id="IPR046346">
    <property type="entry name" value="Aminoacid_DH-like_N_sf"/>
</dbReference>
<dbReference type="InterPro" id="IPR036291">
    <property type="entry name" value="NAD(P)-bd_dom_sf"/>
</dbReference>
<dbReference type="InterPro" id="IPR000672">
    <property type="entry name" value="THF_DH/CycHdrlase"/>
</dbReference>
<dbReference type="InterPro" id="IPR020630">
    <property type="entry name" value="THF_DH/CycHdrlase_cat_dom"/>
</dbReference>
<dbReference type="InterPro" id="IPR020867">
    <property type="entry name" value="THF_DH/CycHdrlase_CS"/>
</dbReference>
<dbReference type="InterPro" id="IPR020631">
    <property type="entry name" value="THF_DH/CycHdrlase_NAD-bd_dom"/>
</dbReference>
<dbReference type="NCBIfam" id="NF008058">
    <property type="entry name" value="PRK10792.1"/>
    <property type="match status" value="1"/>
</dbReference>
<dbReference type="NCBIfam" id="NF010783">
    <property type="entry name" value="PRK14186.1"/>
    <property type="match status" value="1"/>
</dbReference>
<dbReference type="NCBIfam" id="NF010786">
    <property type="entry name" value="PRK14189.1"/>
    <property type="match status" value="1"/>
</dbReference>
<dbReference type="PANTHER" id="PTHR48099:SF5">
    <property type="entry name" value="C-1-TETRAHYDROFOLATE SYNTHASE, CYTOPLASMIC"/>
    <property type="match status" value="1"/>
</dbReference>
<dbReference type="PANTHER" id="PTHR48099">
    <property type="entry name" value="C-1-TETRAHYDROFOLATE SYNTHASE, CYTOPLASMIC-RELATED"/>
    <property type="match status" value="1"/>
</dbReference>
<dbReference type="Pfam" id="PF00763">
    <property type="entry name" value="THF_DHG_CYH"/>
    <property type="match status" value="1"/>
</dbReference>
<dbReference type="Pfam" id="PF02882">
    <property type="entry name" value="THF_DHG_CYH_C"/>
    <property type="match status" value="1"/>
</dbReference>
<dbReference type="PRINTS" id="PR00085">
    <property type="entry name" value="THFDHDRGNASE"/>
</dbReference>
<dbReference type="SUPFAM" id="SSF53223">
    <property type="entry name" value="Aminoacid dehydrogenase-like, N-terminal domain"/>
    <property type="match status" value="1"/>
</dbReference>
<dbReference type="SUPFAM" id="SSF51735">
    <property type="entry name" value="NAD(P)-binding Rossmann-fold domains"/>
    <property type="match status" value="1"/>
</dbReference>
<dbReference type="PROSITE" id="PS00767">
    <property type="entry name" value="THF_DHG_CYH_2"/>
    <property type="match status" value="1"/>
</dbReference>
<gene>
    <name evidence="1" type="primary">folD</name>
    <name type="ordered locus">Bsph_3514</name>
</gene>
<feature type="chain" id="PRO_1000196791" description="Bifunctional protein FolD">
    <location>
        <begin position="1"/>
        <end position="284"/>
    </location>
</feature>
<feature type="binding site" evidence="1">
    <location>
        <begin position="165"/>
        <end position="167"/>
    </location>
    <ligand>
        <name>NADP(+)</name>
        <dbReference type="ChEBI" id="CHEBI:58349"/>
    </ligand>
</feature>
<feature type="binding site" evidence="1">
    <location>
        <position position="190"/>
    </location>
    <ligand>
        <name>NADP(+)</name>
        <dbReference type="ChEBI" id="CHEBI:58349"/>
    </ligand>
</feature>
<feature type="binding site" evidence="1">
    <location>
        <position position="231"/>
    </location>
    <ligand>
        <name>NADP(+)</name>
        <dbReference type="ChEBI" id="CHEBI:58349"/>
    </ligand>
</feature>
<sequence>MSSAIINGKEIGQEIRNAVAERVIRLKEQGLTPGLAVVLVGDNQASATYVRNKQKSCEAIGMYSELIKLPEETKQEELLTQIQQLNQREDIHGILVQLPLPKHIDEDTVIATIAVEKDVDGFSPVSVGKMMLGQETFLPCTPFGVMKLLEYSGIEIAGKHAVIVGRSHIVGKPMGQLLLQKDATVTYTHSKTPDLPSFTKQADILIAAVGRANFITKEHVKEGAVVIDVGINRDDNNKLCGDVNFAEVDGIASHITPVPGGVGPMTITMLLFNTVQAAENKLAN</sequence>
<accession>B1HRX9</accession>